<organism>
    <name type="scientific">Xenopus laevis</name>
    <name type="common">African clawed frog</name>
    <dbReference type="NCBI Taxonomy" id="8355"/>
    <lineage>
        <taxon>Eukaryota</taxon>
        <taxon>Metazoa</taxon>
        <taxon>Chordata</taxon>
        <taxon>Craniata</taxon>
        <taxon>Vertebrata</taxon>
        <taxon>Euteleostomi</taxon>
        <taxon>Amphibia</taxon>
        <taxon>Batrachia</taxon>
        <taxon>Anura</taxon>
        <taxon>Pipoidea</taxon>
        <taxon>Pipidae</taxon>
        <taxon>Xenopodinae</taxon>
        <taxon>Xenopus</taxon>
        <taxon>Xenopus</taxon>
    </lineage>
</organism>
<accession>Q6GQA1</accession>
<reference key="1">
    <citation type="submission" date="2004-06" db="EMBL/GenBank/DDBJ databases">
        <authorList>
            <consortium name="NIH - Xenopus Gene Collection (XGC) project"/>
        </authorList>
    </citation>
    <scope>NUCLEOTIDE SEQUENCE [LARGE SCALE MRNA]</scope>
    <source>
        <tissue>Ovary</tissue>
    </source>
</reference>
<dbReference type="EMBL" id="BC072845">
    <property type="protein sequence ID" value="AAH72845.1"/>
    <property type="status" value="ALT_INIT"/>
    <property type="molecule type" value="mRNA"/>
</dbReference>
<dbReference type="RefSeq" id="NP_001085493.2">
    <property type="nucleotide sequence ID" value="NM_001092024.1"/>
</dbReference>
<dbReference type="SMR" id="Q6GQA1"/>
<dbReference type="DNASU" id="443919"/>
<dbReference type="GeneID" id="443919"/>
<dbReference type="KEGG" id="xla:108709359"/>
<dbReference type="KEGG" id="xla:443919"/>
<dbReference type="CTD" id="443919"/>
<dbReference type="OMA" id="AQFIDDQ"/>
<dbReference type="OrthoDB" id="10257739at2759"/>
<dbReference type="Proteomes" id="UP000186698">
    <property type="component" value="Chromosome 2S"/>
</dbReference>
<dbReference type="Bgee" id="108709359">
    <property type="expression patterns" value="Expressed in oocyte and 19 other cell types or tissues"/>
</dbReference>
<dbReference type="GO" id="GO:0070847">
    <property type="term" value="C:core mediator complex"/>
    <property type="evidence" value="ECO:0000318"/>
    <property type="project" value="GO_Central"/>
</dbReference>
<dbReference type="GO" id="GO:0016592">
    <property type="term" value="C:mediator complex"/>
    <property type="evidence" value="ECO:0000318"/>
    <property type="project" value="GO_Central"/>
</dbReference>
<dbReference type="GO" id="GO:0003712">
    <property type="term" value="F:transcription coregulator activity"/>
    <property type="evidence" value="ECO:0007669"/>
    <property type="project" value="InterPro"/>
</dbReference>
<dbReference type="GO" id="GO:0006357">
    <property type="term" value="P:regulation of transcription by RNA polymerase II"/>
    <property type="evidence" value="ECO:0000318"/>
    <property type="project" value="GO_Central"/>
</dbReference>
<dbReference type="FunFam" id="1.10.10.1340:FF:000001">
    <property type="entry name" value="Mediator of RNA polymerase II transcription subunit 31"/>
    <property type="match status" value="1"/>
</dbReference>
<dbReference type="Gene3D" id="1.10.10.1340">
    <property type="entry name" value="Mediator of RNA polymerase II, submodule Med31 (Soh1)"/>
    <property type="match status" value="1"/>
</dbReference>
<dbReference type="InterPro" id="IPR038089">
    <property type="entry name" value="Med31_sf"/>
</dbReference>
<dbReference type="InterPro" id="IPR008831">
    <property type="entry name" value="Mediator_Med31"/>
</dbReference>
<dbReference type="PANTHER" id="PTHR13186">
    <property type="entry name" value="MEDIATOR OF RNA POLYMERASE II TRANSCRIPTION SUBUNIT 31"/>
    <property type="match status" value="1"/>
</dbReference>
<dbReference type="Pfam" id="PF05669">
    <property type="entry name" value="Med31"/>
    <property type="match status" value="1"/>
</dbReference>
<protein>
    <recommendedName>
        <fullName>Mediator of RNA polymerase II transcription subunit 31-B</fullName>
    </recommendedName>
    <alternativeName>
        <fullName>Mediator complex subunit 31-B</fullName>
    </alternativeName>
    <alternativeName>
        <fullName>Mediator complex subunit soh1-B</fullName>
    </alternativeName>
</protein>
<comment type="function">
    <text evidence="1">Component of the Mediator complex, a coactivator involved in the regulated transcription of nearly all RNA polymerase II-dependent genes. Mediator functions as a bridge to convey information from gene-specific regulatory proteins to the basal RNA polymerase II transcription machinery. Mediator is recruited to promoters by direct interactions with regulatory proteins and serves as a scaffold for the assembly of a functional preinitiation complex with RNA polymerase II and the general transcription factors (By similarity).</text>
</comment>
<comment type="subunit">
    <text evidence="1">Component of the Mediator complex.</text>
</comment>
<comment type="subcellular location">
    <subcellularLocation>
        <location evidence="2">Nucleus</location>
    </subcellularLocation>
</comment>
<comment type="similarity">
    <text evidence="2">Belongs to the Mediator complex subunit 31 family.</text>
</comment>
<comment type="sequence caution" evidence="2">
    <conflict type="erroneous initiation">
        <sequence resource="EMBL-CDS" id="AAH72845"/>
    </conflict>
</comment>
<feature type="chain" id="PRO_0000305710" description="Mediator of RNA polymerase II transcription subunit 31-B">
    <location>
        <begin position="1"/>
        <end position="129"/>
    </location>
</feature>
<name>MD31B_XENLA</name>
<gene>
    <name type="primary">med31-b</name>
    <name type="synonym">soh1-b</name>
</gene>
<sequence length="129" mass="15777">MAAAAMEADEQHRIRFQLELEFVQCLANPNYLNFLAQRGYFKDKSFVNYLKYLLYWKDPEYAKYLKYPQCLHMLELLQYEHFRKELVNAQCAKFIDEQQILHWQHYSRKRMRMQQALAEQQQQNNTSSK</sequence>
<evidence type="ECO:0000250" key="1"/>
<evidence type="ECO:0000305" key="2"/>
<keyword id="KW-0010">Activator</keyword>
<keyword id="KW-0539">Nucleus</keyword>
<keyword id="KW-1185">Reference proteome</keyword>
<keyword id="KW-0804">Transcription</keyword>
<keyword id="KW-0805">Transcription regulation</keyword>
<proteinExistence type="evidence at transcript level"/>